<feature type="chain" id="PRO_0000330440" description="GATA zinc finger domain-containing protein 7">
    <location>
        <begin position="1"/>
        <end position="1006"/>
    </location>
</feature>
<feature type="zinc finger region" description="GATA-type" evidence="1">
    <location>
        <begin position="842"/>
        <end position="867"/>
    </location>
</feature>
<feature type="region of interest" description="Disordered" evidence="2">
    <location>
        <begin position="55"/>
        <end position="116"/>
    </location>
</feature>
<feature type="region of interest" description="Disordered" evidence="2">
    <location>
        <begin position="128"/>
        <end position="248"/>
    </location>
</feature>
<feature type="region of interest" description="Disordered" evidence="2">
    <location>
        <begin position="381"/>
        <end position="499"/>
    </location>
</feature>
<feature type="region of interest" description="Disordered" evidence="2">
    <location>
        <begin position="528"/>
        <end position="638"/>
    </location>
</feature>
<feature type="region of interest" description="Disordered" evidence="2">
    <location>
        <begin position="657"/>
        <end position="800"/>
    </location>
</feature>
<feature type="region of interest" description="Disordered" evidence="2">
    <location>
        <begin position="925"/>
        <end position="957"/>
    </location>
</feature>
<feature type="compositionally biased region" description="Low complexity" evidence="2">
    <location>
        <begin position="55"/>
        <end position="70"/>
    </location>
</feature>
<feature type="compositionally biased region" description="Polar residues" evidence="2">
    <location>
        <begin position="71"/>
        <end position="86"/>
    </location>
</feature>
<feature type="compositionally biased region" description="Low complexity" evidence="2">
    <location>
        <begin position="87"/>
        <end position="110"/>
    </location>
</feature>
<feature type="compositionally biased region" description="Low complexity" evidence="2">
    <location>
        <begin position="128"/>
        <end position="158"/>
    </location>
</feature>
<feature type="compositionally biased region" description="Polar residues" evidence="2">
    <location>
        <begin position="159"/>
        <end position="168"/>
    </location>
</feature>
<feature type="compositionally biased region" description="Low complexity" evidence="2">
    <location>
        <begin position="169"/>
        <end position="180"/>
    </location>
</feature>
<feature type="compositionally biased region" description="Polar residues" evidence="2">
    <location>
        <begin position="181"/>
        <end position="190"/>
    </location>
</feature>
<feature type="compositionally biased region" description="Low complexity" evidence="2">
    <location>
        <begin position="205"/>
        <end position="241"/>
    </location>
</feature>
<feature type="compositionally biased region" description="Low complexity" evidence="2">
    <location>
        <begin position="388"/>
        <end position="410"/>
    </location>
</feature>
<feature type="compositionally biased region" description="Polar residues" evidence="2">
    <location>
        <begin position="411"/>
        <end position="426"/>
    </location>
</feature>
<feature type="compositionally biased region" description="Low complexity" evidence="2">
    <location>
        <begin position="427"/>
        <end position="456"/>
    </location>
</feature>
<feature type="compositionally biased region" description="Low complexity" evidence="2">
    <location>
        <begin position="468"/>
        <end position="496"/>
    </location>
</feature>
<feature type="compositionally biased region" description="Polar residues" evidence="2">
    <location>
        <begin position="528"/>
        <end position="539"/>
    </location>
</feature>
<feature type="compositionally biased region" description="Low complexity" evidence="2">
    <location>
        <begin position="540"/>
        <end position="557"/>
    </location>
</feature>
<feature type="compositionally biased region" description="Polar residues" evidence="2">
    <location>
        <begin position="558"/>
        <end position="589"/>
    </location>
</feature>
<feature type="compositionally biased region" description="Low complexity" evidence="2">
    <location>
        <begin position="590"/>
        <end position="601"/>
    </location>
</feature>
<feature type="compositionally biased region" description="Low complexity" evidence="2">
    <location>
        <begin position="619"/>
        <end position="638"/>
    </location>
</feature>
<feature type="compositionally biased region" description="Polar residues" evidence="2">
    <location>
        <begin position="662"/>
        <end position="680"/>
    </location>
</feature>
<feature type="compositionally biased region" description="Low complexity" evidence="2">
    <location>
        <begin position="681"/>
        <end position="706"/>
    </location>
</feature>
<feature type="compositionally biased region" description="Low complexity" evidence="2">
    <location>
        <begin position="713"/>
        <end position="785"/>
    </location>
</feature>
<feature type="compositionally biased region" description="Low complexity" evidence="2">
    <location>
        <begin position="928"/>
        <end position="954"/>
    </location>
</feature>
<organism>
    <name type="scientific">Dictyostelium discoideum</name>
    <name type="common">Social amoeba</name>
    <dbReference type="NCBI Taxonomy" id="44689"/>
    <lineage>
        <taxon>Eukaryota</taxon>
        <taxon>Amoebozoa</taxon>
        <taxon>Evosea</taxon>
        <taxon>Eumycetozoa</taxon>
        <taxon>Dictyostelia</taxon>
        <taxon>Dictyosteliales</taxon>
        <taxon>Dictyosteliaceae</taxon>
        <taxon>Dictyostelium</taxon>
    </lineage>
</organism>
<name>GTAG_DICDI</name>
<reference key="1">
    <citation type="journal article" date="2005" name="Nature">
        <title>The genome of the social amoeba Dictyostelium discoideum.</title>
        <authorList>
            <person name="Eichinger L."/>
            <person name="Pachebat J.A."/>
            <person name="Gloeckner G."/>
            <person name="Rajandream M.A."/>
            <person name="Sucgang R."/>
            <person name="Berriman M."/>
            <person name="Song J."/>
            <person name="Olsen R."/>
            <person name="Szafranski K."/>
            <person name="Xu Q."/>
            <person name="Tunggal B."/>
            <person name="Kummerfeld S."/>
            <person name="Madera M."/>
            <person name="Konfortov B.A."/>
            <person name="Rivero F."/>
            <person name="Bankier A.T."/>
            <person name="Lehmann R."/>
            <person name="Hamlin N."/>
            <person name="Davies R."/>
            <person name="Gaudet P."/>
            <person name="Fey P."/>
            <person name="Pilcher K."/>
            <person name="Chen G."/>
            <person name="Saunders D."/>
            <person name="Sodergren E.J."/>
            <person name="Davis P."/>
            <person name="Kerhornou A."/>
            <person name="Nie X."/>
            <person name="Hall N."/>
            <person name="Anjard C."/>
            <person name="Hemphill L."/>
            <person name="Bason N."/>
            <person name="Farbrother P."/>
            <person name="Desany B."/>
            <person name="Just E."/>
            <person name="Morio T."/>
            <person name="Rost R."/>
            <person name="Churcher C.M."/>
            <person name="Cooper J."/>
            <person name="Haydock S."/>
            <person name="van Driessche N."/>
            <person name="Cronin A."/>
            <person name="Goodhead I."/>
            <person name="Muzny D.M."/>
            <person name="Mourier T."/>
            <person name="Pain A."/>
            <person name="Lu M."/>
            <person name="Harper D."/>
            <person name="Lindsay R."/>
            <person name="Hauser H."/>
            <person name="James K.D."/>
            <person name="Quiles M."/>
            <person name="Madan Babu M."/>
            <person name="Saito T."/>
            <person name="Buchrieser C."/>
            <person name="Wardroper A."/>
            <person name="Felder M."/>
            <person name="Thangavelu M."/>
            <person name="Johnson D."/>
            <person name="Knights A."/>
            <person name="Loulseged H."/>
            <person name="Mungall K.L."/>
            <person name="Oliver K."/>
            <person name="Price C."/>
            <person name="Quail M.A."/>
            <person name="Urushihara H."/>
            <person name="Hernandez J."/>
            <person name="Rabbinowitsch E."/>
            <person name="Steffen D."/>
            <person name="Sanders M."/>
            <person name="Ma J."/>
            <person name="Kohara Y."/>
            <person name="Sharp S."/>
            <person name="Simmonds M.N."/>
            <person name="Spiegler S."/>
            <person name="Tivey A."/>
            <person name="Sugano S."/>
            <person name="White B."/>
            <person name="Walker D."/>
            <person name="Woodward J.R."/>
            <person name="Winckler T."/>
            <person name="Tanaka Y."/>
            <person name="Shaulsky G."/>
            <person name="Schleicher M."/>
            <person name="Weinstock G.M."/>
            <person name="Rosenthal A."/>
            <person name="Cox E.C."/>
            <person name="Chisholm R.L."/>
            <person name="Gibbs R.A."/>
            <person name="Loomis W.F."/>
            <person name="Platzer M."/>
            <person name="Kay R.R."/>
            <person name="Williams J.G."/>
            <person name="Dear P.H."/>
            <person name="Noegel A.A."/>
            <person name="Barrell B.G."/>
            <person name="Kuspa A."/>
        </authorList>
    </citation>
    <scope>NUCLEOTIDE SEQUENCE [LARGE SCALE GENOMIC DNA]</scope>
    <source>
        <strain>AX4</strain>
    </source>
</reference>
<accession>Q55C49</accession>
<gene>
    <name type="primary">gtaG</name>
    <name type="ORF">DDB_G0270756</name>
</gene>
<evidence type="ECO:0000255" key="1">
    <source>
        <dbReference type="PROSITE-ProRule" id="PRU00094"/>
    </source>
</evidence>
<evidence type="ECO:0000256" key="2">
    <source>
        <dbReference type="SAM" id="MobiDB-lite"/>
    </source>
</evidence>
<protein>
    <recommendedName>
        <fullName>GATA zinc finger domain-containing protein 7</fullName>
    </recommendedName>
</protein>
<keyword id="KW-0479">Metal-binding</keyword>
<keyword id="KW-1185">Reference proteome</keyword>
<keyword id="KW-0862">Zinc</keyword>
<keyword id="KW-0863">Zinc-finger</keyword>
<proteinExistence type="predicted"/>
<sequence length="1006" mass="110895">MKLYSIDFPLNESNNIFPNSSENININNNNINNSNPNNFINSNTDSELYGNYKPSSSNNFINNHHNNQSSDIHSISQSTPNLSTLISSSSNNNNNNNNNNSPNYSMNSSSDQAPNLLNMDSKLRWNQPFQNQQQQQPTSEVSTNSANTSSENTTCNNSPVSSSTNYIPNNSTSNVVLNSSIPTTSPNVLSAPNKKRQRDDIDCGNNNNINNNNINNNINNNNNNNNNNNNNNNNNNNNNNNGYIDPFYLRDDKDFNNNNNVQLDNTNISQFNDSKELNIKIKKDNNNNNINNINNINNNNNINNNINNNKNLQPQQIQQPQQPQQIQQIQQIQQIQQIQQTQPQQQQQQTQQQPQQQPQQLMSGNLKLPSIHHLEFEVEKNAKKDDSTNTNNNNNNNNNNNNNNNNNNNNIQQANVNTSPISTSTTPNNNNNNQIQNQPQQIPQQQAQQQAQQQAQQKKRKTKPSKYSITPSISLTPTTVTSSSSTNSSGSIGASPLSTSTNIPYSVTNNLSSNNLHSYMNPMGQDYSTSGMLSTTNPYTHHSPNTSSTVSSSVTSPLINQYGTNPTLTNNHSFYGSLASNQNTGASDGNNNNNNNNNNNNGGSGYFQSPVILSPFQKSSNPLNNNHNSNNVYNSSNSHNDINDYISLNSSSNNSYYNSNSGSGMTTPQSLGHSPSHNDYNSNNNNNNNNNNNSNNNNSNNSNSNNLTNKYDSNSSLSLLSSIGDNNNNNNNNNNNNNKSHSSSYYSSMSNNSNPSSSSSSSSSSSSSSSTLSSLNNNNKLSSNNGHIKYEPTSSSNYHDQMSQSHIYQNNFTYYDQSFPHPPVKKTHRRRPANIDKSTLYCHNCGTKNTPEWRRGPSGPATLCNACGLAYAKKQREEETNLHKLLLHSNSYSYHRGNMLESYVTPSLLPLFNTAANVPYLNTPNNASSSSSSSSSSSSSSSSSSSTSSYSSSSYNIPNTNTQYNTTSATSSFKPLTFSSLKTPENTRNTLNTNNNKINYSLNGSI</sequence>
<dbReference type="EMBL" id="AAFI02000005">
    <property type="protein sequence ID" value="EAL72728.1"/>
    <property type="molecule type" value="Genomic_DNA"/>
</dbReference>
<dbReference type="RefSeq" id="XP_646632.1">
    <property type="nucleotide sequence ID" value="XM_641540.1"/>
</dbReference>
<dbReference type="SMR" id="Q55C49"/>
<dbReference type="FunCoup" id="Q55C49">
    <property type="interactions" value="435"/>
</dbReference>
<dbReference type="STRING" id="44689.Q55C49"/>
<dbReference type="PaxDb" id="44689-DDB0220467"/>
<dbReference type="EnsemblProtists" id="EAL72728">
    <property type="protein sequence ID" value="EAL72728"/>
    <property type="gene ID" value="DDB_G0270756"/>
</dbReference>
<dbReference type="GeneID" id="8617604"/>
<dbReference type="KEGG" id="ddi:DDB_G0270756"/>
<dbReference type="dictyBase" id="DDB_G0270756">
    <property type="gene designation" value="gtaG"/>
</dbReference>
<dbReference type="VEuPathDB" id="AmoebaDB:DDB_G0270756"/>
<dbReference type="eggNOG" id="KOG1601">
    <property type="taxonomic scope" value="Eukaryota"/>
</dbReference>
<dbReference type="HOGENOM" id="CLU_298680_0_0_1"/>
<dbReference type="InParanoid" id="Q55C49"/>
<dbReference type="OMA" id="HRGNMLE"/>
<dbReference type="PRO" id="PR:Q55C49"/>
<dbReference type="Proteomes" id="UP000002195">
    <property type="component" value="Chromosome 1"/>
</dbReference>
<dbReference type="GO" id="GO:0005634">
    <property type="term" value="C:nucleus"/>
    <property type="evidence" value="ECO:0000318"/>
    <property type="project" value="GO_Central"/>
</dbReference>
<dbReference type="GO" id="GO:0000976">
    <property type="term" value="F:transcription cis-regulatory region binding"/>
    <property type="evidence" value="ECO:0000318"/>
    <property type="project" value="GO_Central"/>
</dbReference>
<dbReference type="GO" id="GO:0008270">
    <property type="term" value="F:zinc ion binding"/>
    <property type="evidence" value="ECO:0007669"/>
    <property type="project" value="UniProtKB-KW"/>
</dbReference>
<dbReference type="GO" id="GO:0010628">
    <property type="term" value="P:positive regulation of gene expression"/>
    <property type="evidence" value="ECO:0000315"/>
    <property type="project" value="dictyBase"/>
</dbReference>
<dbReference type="GO" id="GO:0031287">
    <property type="term" value="P:positive regulation of sorocarp stalk cell differentiation"/>
    <property type="evidence" value="ECO:0000315"/>
    <property type="project" value="dictyBase"/>
</dbReference>
<dbReference type="GO" id="GO:0006357">
    <property type="term" value="P:regulation of transcription by RNA polymerase II"/>
    <property type="evidence" value="ECO:0000318"/>
    <property type="project" value="GO_Central"/>
</dbReference>
<dbReference type="GO" id="GO:0030587">
    <property type="term" value="P:sorocarp development"/>
    <property type="evidence" value="ECO:0007001"/>
    <property type="project" value="dictyBase"/>
</dbReference>
<dbReference type="CDD" id="cd00202">
    <property type="entry name" value="ZnF_GATA"/>
    <property type="match status" value="1"/>
</dbReference>
<dbReference type="Gene3D" id="3.30.50.10">
    <property type="entry name" value="Erythroid Transcription Factor GATA-1, subunit A"/>
    <property type="match status" value="1"/>
</dbReference>
<dbReference type="InterPro" id="IPR052138">
    <property type="entry name" value="GATA_ZnFinger_Domain"/>
</dbReference>
<dbReference type="InterPro" id="IPR000679">
    <property type="entry name" value="Znf_GATA"/>
</dbReference>
<dbReference type="InterPro" id="IPR013088">
    <property type="entry name" value="Znf_NHR/GATA"/>
</dbReference>
<dbReference type="PANTHER" id="PTHR47255">
    <property type="entry name" value="GATA TRANSCRIPTION FACTOR 22-RELATED"/>
    <property type="match status" value="1"/>
</dbReference>
<dbReference type="PANTHER" id="PTHR47255:SF4">
    <property type="entry name" value="GATA ZINC FINGER DOMAIN-CONTAINING PROTEIN 12"/>
    <property type="match status" value="1"/>
</dbReference>
<dbReference type="Pfam" id="PF00320">
    <property type="entry name" value="GATA"/>
    <property type="match status" value="1"/>
</dbReference>
<dbReference type="SMART" id="SM00401">
    <property type="entry name" value="ZnF_GATA"/>
    <property type="match status" value="1"/>
</dbReference>
<dbReference type="SUPFAM" id="SSF57716">
    <property type="entry name" value="Glucocorticoid receptor-like (DNA-binding domain)"/>
    <property type="match status" value="1"/>
</dbReference>
<dbReference type="PROSITE" id="PS00344">
    <property type="entry name" value="GATA_ZN_FINGER_1"/>
    <property type="match status" value="1"/>
</dbReference>
<dbReference type="PROSITE" id="PS50114">
    <property type="entry name" value="GATA_ZN_FINGER_2"/>
    <property type="match status" value="1"/>
</dbReference>